<sequence>MSNLAKQKVSMVSLGCPKNLVDAEVMLGVLAQQGYEITMDEKEADVIIVNTCSFIKEAREESVDAILDLADRKSDGNCKTLVVAGCLPQRYQEELAKELPEVDILIGTGDYPRVAEILAEHHAGDAQIKYVGDPNYIYDEDLPRLNSSPGWYAYLKIGEGCSNCCTYCVIPSLRGPYRSRPVEALVAEAERLVKGGVRELILVSQDITRYGSDMDDTSSLAGLIRRLAAIEDLKWIRLLYAYPDGISDELIELFKTEPKLCNYLDIPIQHISDNVLQRMKRRSSEEQIRTLIARLRNEIPGITLRTSLIVGFPGETVDDFLNLTQFVEKAQFDRLGVFCYSREEGTPAAEMPDQVSERVKRERHRKLMKTQARVSFRRNRAMVGQTEQVIVEGYSEETELLLKGRTSRQAPDIDGQVYITSGHAEIGDIVACKITDSSDYDLVAEMIEE</sequence>
<organism>
    <name type="scientific">Trichlorobacter lovleyi (strain ATCC BAA-1151 / DSM 17278 / SZ)</name>
    <name type="common">Geobacter lovleyi</name>
    <dbReference type="NCBI Taxonomy" id="398767"/>
    <lineage>
        <taxon>Bacteria</taxon>
        <taxon>Pseudomonadati</taxon>
        <taxon>Thermodesulfobacteriota</taxon>
        <taxon>Desulfuromonadia</taxon>
        <taxon>Geobacterales</taxon>
        <taxon>Geobacteraceae</taxon>
        <taxon>Trichlorobacter</taxon>
    </lineage>
</organism>
<keyword id="KW-0004">4Fe-4S</keyword>
<keyword id="KW-0963">Cytoplasm</keyword>
<keyword id="KW-0408">Iron</keyword>
<keyword id="KW-0411">Iron-sulfur</keyword>
<keyword id="KW-0479">Metal-binding</keyword>
<keyword id="KW-1185">Reference proteome</keyword>
<keyword id="KW-0949">S-adenosyl-L-methionine</keyword>
<keyword id="KW-0808">Transferase</keyword>
<proteinExistence type="inferred from homology"/>
<evidence type="ECO:0000255" key="1">
    <source>
        <dbReference type="HAMAP-Rule" id="MF_01865"/>
    </source>
</evidence>
<evidence type="ECO:0000255" key="2">
    <source>
        <dbReference type="PROSITE-ProRule" id="PRU01266"/>
    </source>
</evidence>
<dbReference type="EC" id="2.8.4.4" evidence="1"/>
<dbReference type="EMBL" id="CP001089">
    <property type="protein sequence ID" value="ACD96905.1"/>
    <property type="molecule type" value="Genomic_DNA"/>
</dbReference>
<dbReference type="SMR" id="B3EAM2"/>
<dbReference type="STRING" id="398767.Glov_3199"/>
<dbReference type="KEGG" id="glo:Glov_3199"/>
<dbReference type="eggNOG" id="COG0621">
    <property type="taxonomic scope" value="Bacteria"/>
</dbReference>
<dbReference type="HOGENOM" id="CLU_018697_0_1_7"/>
<dbReference type="OrthoDB" id="9805215at2"/>
<dbReference type="Proteomes" id="UP000002420">
    <property type="component" value="Chromosome"/>
</dbReference>
<dbReference type="GO" id="GO:0005829">
    <property type="term" value="C:cytosol"/>
    <property type="evidence" value="ECO:0007669"/>
    <property type="project" value="TreeGrafter"/>
</dbReference>
<dbReference type="GO" id="GO:0051539">
    <property type="term" value="F:4 iron, 4 sulfur cluster binding"/>
    <property type="evidence" value="ECO:0007669"/>
    <property type="project" value="UniProtKB-UniRule"/>
</dbReference>
<dbReference type="GO" id="GO:0035599">
    <property type="term" value="F:aspartic acid methylthiotransferase activity"/>
    <property type="evidence" value="ECO:0007669"/>
    <property type="project" value="TreeGrafter"/>
</dbReference>
<dbReference type="GO" id="GO:0046872">
    <property type="term" value="F:metal ion binding"/>
    <property type="evidence" value="ECO:0007669"/>
    <property type="project" value="UniProtKB-KW"/>
</dbReference>
<dbReference type="GO" id="GO:0103039">
    <property type="term" value="F:protein methylthiotransferase activity"/>
    <property type="evidence" value="ECO:0007669"/>
    <property type="project" value="UniProtKB-EC"/>
</dbReference>
<dbReference type="GO" id="GO:0006400">
    <property type="term" value="P:tRNA modification"/>
    <property type="evidence" value="ECO:0007669"/>
    <property type="project" value="InterPro"/>
</dbReference>
<dbReference type="CDD" id="cd01335">
    <property type="entry name" value="Radical_SAM"/>
    <property type="match status" value="1"/>
</dbReference>
<dbReference type="FunFam" id="3.40.50.12160:FF:000002">
    <property type="entry name" value="Ribosomal protein S12 methylthiotransferase RimO"/>
    <property type="match status" value="1"/>
</dbReference>
<dbReference type="FunFam" id="3.80.30.20:FF:000001">
    <property type="entry name" value="tRNA-2-methylthio-N(6)-dimethylallyladenosine synthase 2"/>
    <property type="match status" value="1"/>
</dbReference>
<dbReference type="Gene3D" id="3.40.50.12160">
    <property type="entry name" value="Methylthiotransferase, N-terminal domain"/>
    <property type="match status" value="1"/>
</dbReference>
<dbReference type="Gene3D" id="2.40.50.140">
    <property type="entry name" value="Nucleic acid-binding proteins"/>
    <property type="match status" value="1"/>
</dbReference>
<dbReference type="Gene3D" id="3.80.30.20">
    <property type="entry name" value="tm_1862 like domain"/>
    <property type="match status" value="1"/>
</dbReference>
<dbReference type="HAMAP" id="MF_01865">
    <property type="entry name" value="MTTase_RimO"/>
    <property type="match status" value="1"/>
</dbReference>
<dbReference type="InterPro" id="IPR006638">
    <property type="entry name" value="Elp3/MiaA/NifB-like_rSAM"/>
</dbReference>
<dbReference type="InterPro" id="IPR005839">
    <property type="entry name" value="Methylthiotransferase"/>
</dbReference>
<dbReference type="InterPro" id="IPR020612">
    <property type="entry name" value="Methylthiotransferase_CS"/>
</dbReference>
<dbReference type="InterPro" id="IPR013848">
    <property type="entry name" value="Methylthiotransferase_N"/>
</dbReference>
<dbReference type="InterPro" id="IPR038135">
    <property type="entry name" value="Methylthiotransferase_N_sf"/>
</dbReference>
<dbReference type="InterPro" id="IPR012340">
    <property type="entry name" value="NA-bd_OB-fold"/>
</dbReference>
<dbReference type="InterPro" id="IPR005840">
    <property type="entry name" value="Ribosomal_uS12_MeSTrfase_RimO"/>
</dbReference>
<dbReference type="InterPro" id="IPR007197">
    <property type="entry name" value="rSAM"/>
</dbReference>
<dbReference type="InterPro" id="IPR023404">
    <property type="entry name" value="rSAM_horseshoe"/>
</dbReference>
<dbReference type="InterPro" id="IPR002792">
    <property type="entry name" value="TRAM_dom"/>
</dbReference>
<dbReference type="NCBIfam" id="TIGR01125">
    <property type="entry name" value="30S ribosomal protein S12 methylthiotransferase RimO"/>
    <property type="match status" value="1"/>
</dbReference>
<dbReference type="NCBIfam" id="TIGR00089">
    <property type="entry name" value="MiaB/RimO family radical SAM methylthiotransferase"/>
    <property type="match status" value="1"/>
</dbReference>
<dbReference type="PANTHER" id="PTHR43837">
    <property type="entry name" value="RIBOSOMAL PROTEIN S12 METHYLTHIOTRANSFERASE RIMO"/>
    <property type="match status" value="1"/>
</dbReference>
<dbReference type="PANTHER" id="PTHR43837:SF1">
    <property type="entry name" value="RIBOSOMAL PROTEIN US12 METHYLTHIOTRANSFERASE RIMO"/>
    <property type="match status" value="1"/>
</dbReference>
<dbReference type="Pfam" id="PF04055">
    <property type="entry name" value="Radical_SAM"/>
    <property type="match status" value="1"/>
</dbReference>
<dbReference type="Pfam" id="PF18693">
    <property type="entry name" value="TRAM_2"/>
    <property type="match status" value="1"/>
</dbReference>
<dbReference type="Pfam" id="PF00919">
    <property type="entry name" value="UPF0004"/>
    <property type="match status" value="1"/>
</dbReference>
<dbReference type="SFLD" id="SFLDG01082">
    <property type="entry name" value="B12-binding_domain_containing"/>
    <property type="match status" value="1"/>
</dbReference>
<dbReference type="SFLD" id="SFLDS00029">
    <property type="entry name" value="Radical_SAM"/>
    <property type="match status" value="1"/>
</dbReference>
<dbReference type="SFLD" id="SFLDF00274">
    <property type="entry name" value="ribosomal_protein_S12_methylth"/>
    <property type="match status" value="1"/>
</dbReference>
<dbReference type="SMART" id="SM00729">
    <property type="entry name" value="Elp3"/>
    <property type="match status" value="1"/>
</dbReference>
<dbReference type="SUPFAM" id="SSF102114">
    <property type="entry name" value="Radical SAM enzymes"/>
    <property type="match status" value="1"/>
</dbReference>
<dbReference type="PROSITE" id="PS51449">
    <property type="entry name" value="MTTASE_N"/>
    <property type="match status" value="1"/>
</dbReference>
<dbReference type="PROSITE" id="PS01278">
    <property type="entry name" value="MTTASE_RADICAL"/>
    <property type="match status" value="1"/>
</dbReference>
<dbReference type="PROSITE" id="PS51918">
    <property type="entry name" value="RADICAL_SAM"/>
    <property type="match status" value="1"/>
</dbReference>
<dbReference type="PROSITE" id="PS50926">
    <property type="entry name" value="TRAM"/>
    <property type="match status" value="1"/>
</dbReference>
<name>RIMO_TRIL1</name>
<reference key="1">
    <citation type="submission" date="2008-05" db="EMBL/GenBank/DDBJ databases">
        <title>Complete sequence of chromosome of Geobacter lovleyi SZ.</title>
        <authorList>
            <consortium name="US DOE Joint Genome Institute"/>
            <person name="Lucas S."/>
            <person name="Copeland A."/>
            <person name="Lapidus A."/>
            <person name="Glavina del Rio T."/>
            <person name="Dalin E."/>
            <person name="Tice H."/>
            <person name="Bruce D."/>
            <person name="Goodwin L."/>
            <person name="Pitluck S."/>
            <person name="Chertkov O."/>
            <person name="Meincke L."/>
            <person name="Brettin T."/>
            <person name="Detter J.C."/>
            <person name="Han C."/>
            <person name="Tapia R."/>
            <person name="Kuske C.R."/>
            <person name="Schmutz J."/>
            <person name="Larimer F."/>
            <person name="Land M."/>
            <person name="Hauser L."/>
            <person name="Kyrpides N."/>
            <person name="Mikhailova N."/>
            <person name="Sung Y."/>
            <person name="Fletcher K.E."/>
            <person name="Ritalahti K.M."/>
            <person name="Loeffler F.E."/>
            <person name="Richardson P."/>
        </authorList>
    </citation>
    <scope>NUCLEOTIDE SEQUENCE [LARGE SCALE GENOMIC DNA]</scope>
    <source>
        <strain>ATCC BAA-1151 / DSM 17278 / SZ</strain>
    </source>
</reference>
<feature type="chain" id="PRO_0000374844" description="Ribosomal protein uS12 methylthiotransferase RimO">
    <location>
        <begin position="1"/>
        <end position="449"/>
    </location>
</feature>
<feature type="domain" description="MTTase N-terminal" evidence="1">
    <location>
        <begin position="7"/>
        <end position="123"/>
    </location>
</feature>
<feature type="domain" description="Radical SAM core" evidence="2">
    <location>
        <begin position="147"/>
        <end position="377"/>
    </location>
</feature>
<feature type="domain" description="TRAM" evidence="1">
    <location>
        <begin position="380"/>
        <end position="448"/>
    </location>
</feature>
<feature type="binding site" evidence="1">
    <location>
        <position position="16"/>
    </location>
    <ligand>
        <name>[4Fe-4S] cluster</name>
        <dbReference type="ChEBI" id="CHEBI:49883"/>
        <label>1</label>
    </ligand>
</feature>
<feature type="binding site" evidence="1">
    <location>
        <position position="52"/>
    </location>
    <ligand>
        <name>[4Fe-4S] cluster</name>
        <dbReference type="ChEBI" id="CHEBI:49883"/>
        <label>1</label>
    </ligand>
</feature>
<feature type="binding site" evidence="1">
    <location>
        <position position="86"/>
    </location>
    <ligand>
        <name>[4Fe-4S] cluster</name>
        <dbReference type="ChEBI" id="CHEBI:49883"/>
        <label>1</label>
    </ligand>
</feature>
<feature type="binding site" evidence="1">
    <location>
        <position position="161"/>
    </location>
    <ligand>
        <name>[4Fe-4S] cluster</name>
        <dbReference type="ChEBI" id="CHEBI:49883"/>
        <label>2</label>
        <note>4Fe-4S-S-AdoMet</note>
    </ligand>
</feature>
<feature type="binding site" evidence="1">
    <location>
        <position position="165"/>
    </location>
    <ligand>
        <name>[4Fe-4S] cluster</name>
        <dbReference type="ChEBI" id="CHEBI:49883"/>
        <label>2</label>
        <note>4Fe-4S-S-AdoMet</note>
    </ligand>
</feature>
<feature type="binding site" evidence="1">
    <location>
        <position position="168"/>
    </location>
    <ligand>
        <name>[4Fe-4S] cluster</name>
        <dbReference type="ChEBI" id="CHEBI:49883"/>
        <label>2</label>
        <note>4Fe-4S-S-AdoMet</note>
    </ligand>
</feature>
<accession>B3EAM2</accession>
<gene>
    <name evidence="1" type="primary">rimO</name>
    <name type="ordered locus">Glov_3199</name>
</gene>
<comment type="function">
    <text evidence="1">Catalyzes the methylthiolation of an aspartic acid residue of ribosomal protein uS12.</text>
</comment>
<comment type="catalytic activity">
    <reaction evidence="1">
        <text>L-aspartate(89)-[ribosomal protein uS12]-hydrogen + (sulfur carrier)-SH + AH2 + 2 S-adenosyl-L-methionine = 3-methylsulfanyl-L-aspartate(89)-[ribosomal protein uS12]-hydrogen + (sulfur carrier)-H + 5'-deoxyadenosine + L-methionine + A + S-adenosyl-L-homocysteine + 2 H(+)</text>
        <dbReference type="Rhea" id="RHEA:37087"/>
        <dbReference type="Rhea" id="RHEA-COMP:10460"/>
        <dbReference type="Rhea" id="RHEA-COMP:10461"/>
        <dbReference type="Rhea" id="RHEA-COMP:14737"/>
        <dbReference type="Rhea" id="RHEA-COMP:14739"/>
        <dbReference type="ChEBI" id="CHEBI:13193"/>
        <dbReference type="ChEBI" id="CHEBI:15378"/>
        <dbReference type="ChEBI" id="CHEBI:17319"/>
        <dbReference type="ChEBI" id="CHEBI:17499"/>
        <dbReference type="ChEBI" id="CHEBI:29917"/>
        <dbReference type="ChEBI" id="CHEBI:29961"/>
        <dbReference type="ChEBI" id="CHEBI:57844"/>
        <dbReference type="ChEBI" id="CHEBI:57856"/>
        <dbReference type="ChEBI" id="CHEBI:59789"/>
        <dbReference type="ChEBI" id="CHEBI:64428"/>
        <dbReference type="ChEBI" id="CHEBI:73599"/>
        <dbReference type="EC" id="2.8.4.4"/>
    </reaction>
</comment>
<comment type="cofactor">
    <cofactor evidence="1">
        <name>[4Fe-4S] cluster</name>
        <dbReference type="ChEBI" id="CHEBI:49883"/>
    </cofactor>
    <text evidence="1">Binds 2 [4Fe-4S] clusters. One cluster is coordinated with 3 cysteines and an exchangeable S-adenosyl-L-methionine.</text>
</comment>
<comment type="subcellular location">
    <subcellularLocation>
        <location evidence="1">Cytoplasm</location>
    </subcellularLocation>
</comment>
<comment type="similarity">
    <text evidence="1">Belongs to the methylthiotransferase family. RimO subfamily.</text>
</comment>
<protein>
    <recommendedName>
        <fullName evidence="1">Ribosomal protein uS12 methylthiotransferase RimO</fullName>
        <shortName evidence="1">uS12 MTTase</shortName>
        <shortName evidence="1">uS12 methylthiotransferase</shortName>
        <ecNumber evidence="1">2.8.4.4</ecNumber>
    </recommendedName>
    <alternativeName>
        <fullName evidence="1">Ribosomal protein uS12 (aspartate-C(3))-methylthiotransferase</fullName>
    </alternativeName>
    <alternativeName>
        <fullName evidence="1">Ribosome maturation factor RimO</fullName>
    </alternativeName>
</protein>